<accession>Q9HTJ1</accession>
<gene>
    <name evidence="1" type="primary">betB</name>
    <name type="ordered locus">PA5373</name>
</gene>
<protein>
    <recommendedName>
        <fullName evidence="1">NAD/NADP-dependent betaine aldehyde dehydrogenase</fullName>
        <shortName evidence="1">BADH</shortName>
        <ecNumber evidence="1">1.2.1.8</ecNumber>
    </recommendedName>
</protein>
<name>BETB_PSEAE</name>
<dbReference type="EC" id="1.2.1.8" evidence="1"/>
<dbReference type="EMBL" id="AE004091">
    <property type="protein sequence ID" value="AAG08758.1"/>
    <property type="molecule type" value="Genomic_DNA"/>
</dbReference>
<dbReference type="PIR" id="F82973">
    <property type="entry name" value="F82973"/>
</dbReference>
<dbReference type="RefSeq" id="NP_254060.1">
    <property type="nucleotide sequence ID" value="NC_002516.2"/>
</dbReference>
<dbReference type="RefSeq" id="WP_003114436.1">
    <property type="nucleotide sequence ID" value="NZ_QZGE01000031.1"/>
</dbReference>
<dbReference type="PDB" id="2WME">
    <property type="method" value="X-ray"/>
    <property type="resolution" value="2.10 A"/>
    <property type="chains" value="A/B/C/D/E/F/G/H=1-490"/>
</dbReference>
<dbReference type="PDB" id="2WOX">
    <property type="method" value="X-ray"/>
    <property type="resolution" value="2.30 A"/>
    <property type="chains" value="A/B/C/D=2-490"/>
</dbReference>
<dbReference type="PDB" id="2XDR">
    <property type="method" value="X-ray"/>
    <property type="resolution" value="2.30 A"/>
    <property type="chains" value="A/B/C/D=2-490"/>
</dbReference>
<dbReference type="PDB" id="3ZQA">
    <property type="method" value="X-ray"/>
    <property type="resolution" value="2.45 A"/>
    <property type="chains" value="A/B/C/D=1-490"/>
</dbReference>
<dbReference type="PDB" id="4CAZ">
    <property type="method" value="X-ray"/>
    <property type="resolution" value="2.55 A"/>
    <property type="chains" value="A/B=1-490"/>
</dbReference>
<dbReference type="PDB" id="4CBB">
    <property type="method" value="X-ray"/>
    <property type="resolution" value="1.80 A"/>
    <property type="chains" value="A/B/C/D/E/F/G/H=2-490"/>
</dbReference>
<dbReference type="PDB" id="6BJP">
    <property type="method" value="X-ray"/>
    <property type="resolution" value="2.10 A"/>
    <property type="chains" value="A/B/C/D=1-490"/>
</dbReference>
<dbReference type="PDB" id="6BPG">
    <property type="method" value="X-ray"/>
    <property type="resolution" value="3.09 A"/>
    <property type="chains" value="A/B/C/D/E/F/G/H=1-490"/>
</dbReference>
<dbReference type="PDBsum" id="2WME"/>
<dbReference type="PDBsum" id="2WOX"/>
<dbReference type="PDBsum" id="2XDR"/>
<dbReference type="PDBsum" id="3ZQA"/>
<dbReference type="PDBsum" id="4CAZ"/>
<dbReference type="PDBsum" id="4CBB"/>
<dbReference type="PDBsum" id="6BJP"/>
<dbReference type="PDBsum" id="6BPG"/>
<dbReference type="SMR" id="Q9HTJ1"/>
<dbReference type="FunCoup" id="Q9HTJ1">
    <property type="interactions" value="399"/>
</dbReference>
<dbReference type="STRING" id="208964.PA5373"/>
<dbReference type="PaxDb" id="208964-PA5373"/>
<dbReference type="DNASU" id="881619"/>
<dbReference type="GeneID" id="881619"/>
<dbReference type="KEGG" id="pae:PA5373"/>
<dbReference type="PATRIC" id="fig|208964.12.peg.5630"/>
<dbReference type="PseudoCAP" id="PA5373"/>
<dbReference type="HOGENOM" id="CLU_005391_0_2_6"/>
<dbReference type="InParanoid" id="Q9HTJ1"/>
<dbReference type="OrthoDB" id="9812625at2"/>
<dbReference type="PhylomeDB" id="Q9HTJ1"/>
<dbReference type="BioCyc" id="PAER208964:G1FZ6-5500-MONOMER"/>
<dbReference type="BRENDA" id="1.2.1.8">
    <property type="organism ID" value="5087"/>
</dbReference>
<dbReference type="UniPathway" id="UPA00529">
    <property type="reaction ID" value="UER00386"/>
</dbReference>
<dbReference type="EvolutionaryTrace" id="Q9HTJ1"/>
<dbReference type="Proteomes" id="UP000002438">
    <property type="component" value="Chromosome"/>
</dbReference>
<dbReference type="GO" id="GO:0008802">
    <property type="term" value="F:betaine-aldehyde dehydrogenase (NAD+) activity"/>
    <property type="evidence" value="ECO:0000318"/>
    <property type="project" value="GO_Central"/>
</dbReference>
<dbReference type="GO" id="GO:0046872">
    <property type="term" value="F:metal ion binding"/>
    <property type="evidence" value="ECO:0007669"/>
    <property type="project" value="UniProtKB-KW"/>
</dbReference>
<dbReference type="GO" id="GO:0019285">
    <property type="term" value="P:glycine betaine biosynthetic process from choline"/>
    <property type="evidence" value="ECO:0007669"/>
    <property type="project" value="UniProtKB-UniRule"/>
</dbReference>
<dbReference type="CDD" id="cd07090">
    <property type="entry name" value="ALDH_F9_TMBADH"/>
    <property type="match status" value="1"/>
</dbReference>
<dbReference type="FunFam" id="3.40.309.10:FF:000014">
    <property type="entry name" value="NAD/NADP-dependent betaine aldehyde dehydrogenase"/>
    <property type="match status" value="1"/>
</dbReference>
<dbReference type="FunFam" id="3.40.605.10:FF:000007">
    <property type="entry name" value="NAD/NADP-dependent betaine aldehyde dehydrogenase"/>
    <property type="match status" value="1"/>
</dbReference>
<dbReference type="Gene3D" id="3.40.605.10">
    <property type="entry name" value="Aldehyde Dehydrogenase, Chain A, domain 1"/>
    <property type="match status" value="1"/>
</dbReference>
<dbReference type="Gene3D" id="3.40.309.10">
    <property type="entry name" value="Aldehyde Dehydrogenase, Chain A, domain 2"/>
    <property type="match status" value="1"/>
</dbReference>
<dbReference type="HAMAP" id="MF_00804">
    <property type="entry name" value="BADH"/>
    <property type="match status" value="1"/>
</dbReference>
<dbReference type="InterPro" id="IPR016161">
    <property type="entry name" value="Ald_DH/histidinol_DH"/>
</dbReference>
<dbReference type="InterPro" id="IPR016163">
    <property type="entry name" value="Ald_DH_C"/>
</dbReference>
<dbReference type="InterPro" id="IPR016160">
    <property type="entry name" value="Ald_DH_CS_CYS"/>
</dbReference>
<dbReference type="InterPro" id="IPR029510">
    <property type="entry name" value="Ald_DH_CS_GLU"/>
</dbReference>
<dbReference type="InterPro" id="IPR016162">
    <property type="entry name" value="Ald_DH_N"/>
</dbReference>
<dbReference type="InterPro" id="IPR015590">
    <property type="entry name" value="Aldehyde_DH_dom"/>
</dbReference>
<dbReference type="InterPro" id="IPR011264">
    <property type="entry name" value="BADH"/>
</dbReference>
<dbReference type="NCBIfam" id="TIGR01804">
    <property type="entry name" value="BADH"/>
    <property type="match status" value="1"/>
</dbReference>
<dbReference type="NCBIfam" id="NF009725">
    <property type="entry name" value="PRK13252.1"/>
    <property type="match status" value="1"/>
</dbReference>
<dbReference type="PANTHER" id="PTHR11699">
    <property type="entry name" value="ALDEHYDE DEHYDROGENASE-RELATED"/>
    <property type="match status" value="1"/>
</dbReference>
<dbReference type="Pfam" id="PF00171">
    <property type="entry name" value="Aldedh"/>
    <property type="match status" value="1"/>
</dbReference>
<dbReference type="SUPFAM" id="SSF53720">
    <property type="entry name" value="ALDH-like"/>
    <property type="match status" value="1"/>
</dbReference>
<dbReference type="PROSITE" id="PS00070">
    <property type="entry name" value="ALDEHYDE_DEHYDR_CYS"/>
    <property type="match status" value="1"/>
</dbReference>
<dbReference type="PROSITE" id="PS00687">
    <property type="entry name" value="ALDEHYDE_DEHYDR_GLU"/>
    <property type="match status" value="1"/>
</dbReference>
<organism>
    <name type="scientific">Pseudomonas aeruginosa (strain ATCC 15692 / DSM 22644 / CIP 104116 / JCM 14847 / LMG 12228 / 1C / PRS 101 / PAO1)</name>
    <dbReference type="NCBI Taxonomy" id="208964"/>
    <lineage>
        <taxon>Bacteria</taxon>
        <taxon>Pseudomonadati</taxon>
        <taxon>Pseudomonadota</taxon>
        <taxon>Gammaproteobacteria</taxon>
        <taxon>Pseudomonadales</taxon>
        <taxon>Pseudomonadaceae</taxon>
        <taxon>Pseudomonas</taxon>
    </lineage>
</organism>
<feature type="chain" id="PRO_0000056546" description="NAD/NADP-dependent betaine aldehyde dehydrogenase">
    <location>
        <begin position="1"/>
        <end position="490"/>
    </location>
</feature>
<feature type="active site" description="Charge relay system" evidence="1 3">
    <location>
        <position position="162"/>
    </location>
</feature>
<feature type="active site" description="Proton acceptor" evidence="1 3">
    <location>
        <position position="252"/>
    </location>
</feature>
<feature type="active site" description="Nucleophile" evidence="7">
    <location>
        <position position="286"/>
    </location>
</feature>
<feature type="active site" description="Charge relay system" evidence="1 3">
    <location>
        <position position="464"/>
    </location>
</feature>
<feature type="binding site">
    <location>
        <position position="26"/>
    </location>
    <ligand>
        <name>K(+)</name>
        <dbReference type="ChEBI" id="CHEBI:29103"/>
        <label>1</label>
    </ligand>
</feature>
<feature type="binding site">
    <location>
        <position position="27"/>
    </location>
    <ligand>
        <name>K(+)</name>
        <dbReference type="ChEBI" id="CHEBI:29103"/>
        <label>1</label>
    </ligand>
</feature>
<feature type="binding site">
    <location>
        <position position="93"/>
    </location>
    <ligand>
        <name>K(+)</name>
        <dbReference type="ChEBI" id="CHEBI:29103"/>
        <label>1</label>
    </ligand>
</feature>
<feature type="binding site" evidence="4 8">
    <location>
        <begin position="150"/>
        <end position="153"/>
    </location>
    <ligand>
        <name>NADPH</name>
        <dbReference type="ChEBI" id="CHEBI:57783"/>
    </ligand>
</feature>
<feature type="binding site" evidence="4 8">
    <location>
        <begin position="176"/>
        <end position="179"/>
    </location>
    <ligand>
        <name>NADPH</name>
        <dbReference type="ChEBI" id="CHEBI:57783"/>
    </ligand>
</feature>
<feature type="binding site">
    <location>
        <position position="180"/>
    </location>
    <ligand>
        <name>K(+)</name>
        <dbReference type="ChEBI" id="CHEBI:29103"/>
        <label>1</label>
    </ligand>
</feature>
<feature type="binding site" evidence="4 8">
    <location>
        <position position="209"/>
    </location>
    <ligand>
        <name>NADPH</name>
        <dbReference type="ChEBI" id="CHEBI:57783"/>
    </ligand>
</feature>
<feature type="binding site" evidence="4 8">
    <location>
        <begin position="230"/>
        <end position="233"/>
    </location>
    <ligand>
        <name>NADPH</name>
        <dbReference type="ChEBI" id="CHEBI:57783"/>
    </ligand>
</feature>
<feature type="binding site">
    <location>
        <position position="246"/>
    </location>
    <ligand>
        <name>K(+)</name>
        <dbReference type="ChEBI" id="CHEBI:29103"/>
        <label>2</label>
    </ligand>
</feature>
<feature type="binding site" description="covalent" evidence="4 8">
    <location>
        <position position="286"/>
    </location>
    <ligand>
        <name>NADPH</name>
        <dbReference type="ChEBI" id="CHEBI:57783"/>
    </ligand>
</feature>
<feature type="binding site" evidence="4 8">
    <location>
        <position position="387"/>
    </location>
    <ligand>
        <name>NADPH</name>
        <dbReference type="ChEBI" id="CHEBI:57783"/>
    </ligand>
</feature>
<feature type="binding site">
    <location>
        <position position="457"/>
    </location>
    <ligand>
        <name>K(+)</name>
        <dbReference type="ChEBI" id="CHEBI:29103"/>
        <label>2</label>
    </ligand>
</feature>
<feature type="binding site">
    <location>
        <position position="460"/>
    </location>
    <ligand>
        <name>K(+)</name>
        <dbReference type="ChEBI" id="CHEBI:29103"/>
        <label>2</label>
    </ligand>
</feature>
<feature type="site" description="Seems to be a necessary countercharge to the potassium cations">
    <location>
        <position position="248"/>
    </location>
</feature>
<feature type="modified residue" description="Cysteine sulfenic acid (-SOH)" evidence="1 3">
    <location>
        <position position="286"/>
    </location>
</feature>
<feature type="strand" evidence="11">
    <location>
        <begin position="9"/>
        <end position="11"/>
    </location>
</feature>
<feature type="strand" evidence="10">
    <location>
        <begin position="12"/>
        <end position="16"/>
    </location>
</feature>
<feature type="strand" evidence="10">
    <location>
        <begin position="19"/>
        <end position="21"/>
    </location>
</feature>
<feature type="strand" evidence="10">
    <location>
        <begin position="23"/>
        <end position="27"/>
    </location>
</feature>
<feature type="turn" evidence="10">
    <location>
        <begin position="29"/>
        <end position="31"/>
    </location>
</feature>
<feature type="strand" evidence="10">
    <location>
        <begin position="34"/>
        <end position="39"/>
    </location>
</feature>
<feature type="helix" evidence="10">
    <location>
        <begin position="43"/>
        <end position="62"/>
    </location>
</feature>
<feature type="helix" evidence="10">
    <location>
        <begin position="65"/>
        <end position="81"/>
    </location>
</feature>
<feature type="helix" evidence="10">
    <location>
        <begin position="83"/>
        <end position="94"/>
    </location>
</feature>
<feature type="helix" evidence="10">
    <location>
        <begin position="98"/>
        <end position="101"/>
    </location>
</feature>
<feature type="turn" evidence="10">
    <location>
        <begin position="102"/>
        <end position="104"/>
    </location>
</feature>
<feature type="helix" evidence="10">
    <location>
        <begin position="105"/>
        <end position="119"/>
    </location>
</feature>
<feature type="helix" evidence="10">
    <location>
        <begin position="120"/>
        <end position="122"/>
    </location>
</feature>
<feature type="strand" evidence="10">
    <location>
        <begin position="125"/>
        <end position="131"/>
    </location>
</feature>
<feature type="strand" evidence="10">
    <location>
        <begin position="134"/>
        <end position="142"/>
    </location>
</feature>
<feature type="strand" evidence="10">
    <location>
        <begin position="144"/>
        <end position="149"/>
    </location>
</feature>
<feature type="strand" evidence="10">
    <location>
        <begin position="152"/>
        <end position="154"/>
    </location>
</feature>
<feature type="helix" evidence="10">
    <location>
        <begin position="155"/>
        <end position="168"/>
    </location>
</feature>
<feature type="strand" evidence="10">
    <location>
        <begin position="172"/>
        <end position="176"/>
    </location>
</feature>
<feature type="helix" evidence="10">
    <location>
        <begin position="183"/>
        <end position="195"/>
    </location>
</feature>
<feature type="strand" evidence="10">
    <location>
        <begin position="201"/>
        <end position="204"/>
    </location>
</feature>
<feature type="turn" evidence="10">
    <location>
        <begin position="209"/>
        <end position="211"/>
    </location>
</feature>
<feature type="helix" evidence="10">
    <location>
        <begin position="212"/>
        <end position="218"/>
    </location>
</feature>
<feature type="strand" evidence="10">
    <location>
        <begin position="224"/>
        <end position="229"/>
    </location>
</feature>
<feature type="helix" evidence="10">
    <location>
        <begin position="231"/>
        <end position="245"/>
    </location>
</feature>
<feature type="strand" evidence="10">
    <location>
        <begin position="248"/>
        <end position="252"/>
    </location>
</feature>
<feature type="strand" evidence="10">
    <location>
        <begin position="258"/>
        <end position="261"/>
    </location>
</feature>
<feature type="helix" evidence="10">
    <location>
        <begin position="267"/>
        <end position="279"/>
    </location>
</feature>
<feature type="helix" evidence="10">
    <location>
        <begin position="280"/>
        <end position="283"/>
    </location>
</feature>
<feature type="strand" evidence="10">
    <location>
        <begin position="291"/>
        <end position="295"/>
    </location>
</feature>
<feature type="helix" evidence="10">
    <location>
        <begin position="296"/>
        <end position="298"/>
    </location>
</feature>
<feature type="helix" evidence="10">
    <location>
        <begin position="299"/>
        <end position="311"/>
    </location>
</feature>
<feature type="helix" evidence="10">
    <location>
        <begin position="331"/>
        <end position="346"/>
    </location>
</feature>
<feature type="strand" evidence="10">
    <location>
        <begin position="350"/>
        <end position="353"/>
    </location>
</feature>
<feature type="turn" evidence="10">
    <location>
        <begin position="360"/>
        <end position="362"/>
    </location>
</feature>
<feature type="helix" evidence="10">
    <location>
        <begin position="363"/>
        <end position="365"/>
    </location>
</feature>
<feature type="strand" evidence="10">
    <location>
        <begin position="372"/>
        <end position="376"/>
    </location>
</feature>
<feature type="helix" evidence="10">
    <location>
        <begin position="382"/>
        <end position="385"/>
    </location>
</feature>
<feature type="strand" evidence="10">
    <location>
        <begin position="390"/>
        <end position="400"/>
    </location>
</feature>
<feature type="helix" evidence="10">
    <location>
        <begin position="401"/>
        <end position="409"/>
    </location>
</feature>
<feature type="strand" evidence="11">
    <location>
        <begin position="410"/>
        <end position="412"/>
    </location>
</feature>
<feature type="strand" evidence="10">
    <location>
        <begin position="415"/>
        <end position="420"/>
    </location>
</feature>
<feature type="helix" evidence="10">
    <location>
        <begin position="424"/>
        <end position="433"/>
    </location>
</feature>
<feature type="strand" evidence="10">
    <location>
        <begin position="437"/>
        <end position="442"/>
    </location>
</feature>
<feature type="helix" evidence="10">
    <location>
        <begin position="457"/>
        <end position="459"/>
    </location>
</feature>
<feature type="strand" evidence="10">
    <location>
        <begin position="460"/>
        <end position="462"/>
    </location>
</feature>
<feature type="helix" evidence="10">
    <location>
        <begin position="466"/>
        <end position="471"/>
    </location>
</feature>
<feature type="strand" evidence="10">
    <location>
        <begin position="474"/>
        <end position="482"/>
    </location>
</feature>
<sequence length="490" mass="53332">MARFEEQKLYIGGRYVEASSGATFETINPANGEVLAKVQRASREDVERAVQSAVEGQKVWAAMTAMQRSRILRRAVDILRERNDELAALETLDTGKPLAETRSVDIVTGADVLEYYAGLVPAIEGEQIPLRETSFVYTRREPLGVVAGIGAWNYPVQIALWKSAPALAAGNAMIFKPSEVTPLTALKLAEIYTEAGVPDGVFNVLTGSGREVGQWLTEHPLIEKISFTGGTSTGKKVMASASSSSLKEVTMELGGKSPLIIFPDADLDRAADIAVMANFFSSGQVCTNGTRVFIHRSQQARFEAKVLERVQRIRLGDPQDENTNFGPLVSFPHMESVLGYIESGKAQKARLLCGGERVTDGAFGKGAYVAPTVFTDCRDDMTIVREEIFGPVMSILVYDDEDEAIRRANDTEYGLAAGVVTQDLARAHRAIHRLEAGICWINTWGESPAEMPVGGYKQSGVGRENGLTTLAHYTRIKSVQVELGDYASVF</sequence>
<evidence type="ECO:0000255" key="1">
    <source>
        <dbReference type="HAMAP-Rule" id="MF_00804"/>
    </source>
</evidence>
<evidence type="ECO:0000269" key="2">
    <source>
    </source>
</evidence>
<evidence type="ECO:0000269" key="3">
    <source>
    </source>
</evidence>
<evidence type="ECO:0000269" key="4">
    <source>
    </source>
</evidence>
<evidence type="ECO:0000269" key="5">
    <source ref="4"/>
</evidence>
<evidence type="ECO:0000305" key="6">
    <source>
    </source>
</evidence>
<evidence type="ECO:0000305" key="7">
    <source>
    </source>
</evidence>
<evidence type="ECO:0007744" key="8">
    <source>
        <dbReference type="PDB" id="2WOX"/>
    </source>
</evidence>
<evidence type="ECO:0007744" key="9">
    <source>
        <dbReference type="PDB" id="3ZQA"/>
    </source>
</evidence>
<evidence type="ECO:0007829" key="10">
    <source>
        <dbReference type="PDB" id="4CBB"/>
    </source>
</evidence>
<evidence type="ECO:0007829" key="11">
    <source>
        <dbReference type="PDB" id="6BPG"/>
    </source>
</evidence>
<reference key="1">
    <citation type="journal article" date="2000" name="Nature">
        <title>Complete genome sequence of Pseudomonas aeruginosa PAO1, an opportunistic pathogen.</title>
        <authorList>
            <person name="Stover C.K."/>
            <person name="Pham X.-Q.T."/>
            <person name="Erwin A.L."/>
            <person name="Mizoguchi S.D."/>
            <person name="Warrener P."/>
            <person name="Hickey M.J."/>
            <person name="Brinkman F.S.L."/>
            <person name="Hufnagle W.O."/>
            <person name="Kowalik D.J."/>
            <person name="Lagrou M."/>
            <person name="Garber R.L."/>
            <person name="Goltry L."/>
            <person name="Tolentino E."/>
            <person name="Westbrock-Wadman S."/>
            <person name="Yuan Y."/>
            <person name="Brody L.L."/>
            <person name="Coulter S.N."/>
            <person name="Folger K.R."/>
            <person name="Kas A."/>
            <person name="Larbig K."/>
            <person name="Lim R.M."/>
            <person name="Smith K.A."/>
            <person name="Spencer D.H."/>
            <person name="Wong G.K.-S."/>
            <person name="Wu Z."/>
            <person name="Paulsen I.T."/>
            <person name="Reizer J."/>
            <person name="Saier M.H. Jr."/>
            <person name="Hancock R.E.W."/>
            <person name="Lory S."/>
            <person name="Olson M.V."/>
        </authorList>
    </citation>
    <scope>NUCLEOTIDE SEQUENCE [LARGE SCALE GENOMIC DNA]</scope>
    <source>
        <strain>ATCC 15692 / DSM 22644 / CIP 104116 / JCM 14847 / LMG 12228 / 1C / PRS 101 / PAO1</strain>
    </source>
</reference>
<reference key="2">
    <citation type="journal article" date="2000" name="Biochem. J.">
        <title>Steady-state kinetic mechanism of the NADP+- and NAD+-dependent reactions catalysed by betaine aldehyde dehydrogenase from Pseudomonas aeruginosa.</title>
        <authorList>
            <person name="Velasco-Garcia R."/>
            <person name="Gonzalez-Segura L."/>
            <person name="Munoz-Clares R.A."/>
        </authorList>
    </citation>
    <scope>FUNCTION</scope>
    <scope>CATALYTIC ACTIVITY</scope>
    <scope>BIOPHYSICOCHEMICAL PROPERTIES</scope>
    <source>
        <strain>ATCC 15692 / DSM 22644 / CIP 104116 / JCM 14847 / LMG 12228 / 1C / PRS 101 / PAO1</strain>
    </source>
</reference>
<reference key="3">
    <citation type="journal article" date="2009" name="J. Mol. Biol.">
        <title>The crystal structure of a ternary complex of betaine aldehyde dehydrogenase from Pseudomonas aeruginosa Provides new insight into the reaction mechanism and shows a novel binding mode of the 2'-phosphate of NADP+ and a novel cation binding site.</title>
        <authorList>
            <person name="Gonzalez-Segura L."/>
            <person name="Rudino-Pinera E."/>
            <person name="Munoz-Clares R.A."/>
            <person name="Horjales E."/>
        </authorList>
    </citation>
    <scope>X-RAY CRYSTALLOGRAPHY (2.10 ANGSTROMS) IN COMPLEX WITH NADP AND POTASSIUM IONS</scope>
    <scope>ACTIVE SITE</scope>
    <scope>OXIDATION AT CYS-286</scope>
    <scope>REACTION MECHANISM</scope>
    <scope>COFACTOR</scope>
    <scope>SUBUNIT</scope>
</reference>
<reference key="4">
    <citation type="submission" date="2010-05" db="PDB data bank">
        <title>A novel cysteine-NADPH covalent adduct in Pseudomonas aeruginosa betaine aldehyde dehydrogenase suggests important roles for the reduced nucleotide in the reaction mechanism.</title>
        <authorList>
            <person name="Diaz-Sanchez A.G."/>
            <person name="Gonzalez-Segura L."/>
            <person name="Rudino-Pinera E."/>
            <person name="Lira-Rocha A."/>
            <person name="Munoz-Clares R.A."/>
        </authorList>
    </citation>
    <scope>X-RAY CRYSTALLOGRAPHY (2.30 ANGSTROMS) OF 2-490 IN COMPLEX WITH NADP AND POTASSIUM IONS</scope>
    <scope>SUBUNIT</scope>
</reference>
<reference evidence="8 9" key="5">
    <citation type="journal article" date="2011" name="Biochem. J.">
        <title>Novel NADPH-cysteine covalent adduct found in the active site of an aldehyde dehydrogenase.</title>
        <authorList>
            <person name="Diaz-Sanchez A.G."/>
            <person name="Gonzalez-Segura L."/>
            <person name="Rudino-Pinera E."/>
            <person name="Lira-Rocha A."/>
            <person name="Torres-Larios A."/>
            <person name="Munoz-Clares R.A."/>
        </authorList>
    </citation>
    <scope>X-RAY CRYSTALLOGRAPHY (2.30 ANGSTROMS) OF 2-490 OF WILD-TYPE AND MUTANT ALA-286 IN COMPLEX WITH NADP AND POTASSIUM IONS</scope>
    <scope>FUNCTION</scope>
    <scope>COFACTOR</scope>
    <scope>SUBUNIT</scope>
    <scope>REACTION MECHANISM</scope>
</reference>
<proteinExistence type="evidence at protein level"/>
<keyword id="KW-0002">3D-structure</keyword>
<keyword id="KW-0479">Metal-binding</keyword>
<keyword id="KW-0520">NAD</keyword>
<keyword id="KW-0558">Oxidation</keyword>
<keyword id="KW-0560">Oxidoreductase</keyword>
<keyword id="KW-0630">Potassium</keyword>
<keyword id="KW-1185">Reference proteome</keyword>
<comment type="function">
    <text evidence="1 2 4">Involved in the biosynthesis of the osmoprotectant glycine betaine. Catalyzes the irreversible oxidation of betaine aldehyde to the corresponding acid. In P.aeruginosa this reaction is a compulsory step in the assimilation of carbon and nitrogen when bacteria are growing in choline or choline precursors. Can use NADP(+) with similar efficiency to NAD(+), a property that can be used by the bacterium to produce the NADPH needed to combat the oxidative stress imposed by the host defenses.</text>
</comment>
<comment type="catalytic activity">
    <reaction evidence="1 2">
        <text>betaine aldehyde + NAD(+) + H2O = glycine betaine + NADH + 2 H(+)</text>
        <dbReference type="Rhea" id="RHEA:15305"/>
        <dbReference type="ChEBI" id="CHEBI:15377"/>
        <dbReference type="ChEBI" id="CHEBI:15378"/>
        <dbReference type="ChEBI" id="CHEBI:15710"/>
        <dbReference type="ChEBI" id="CHEBI:17750"/>
        <dbReference type="ChEBI" id="CHEBI:57540"/>
        <dbReference type="ChEBI" id="CHEBI:57945"/>
        <dbReference type="EC" id="1.2.1.8"/>
    </reaction>
    <physiologicalReaction direction="left-to-right" evidence="6">
        <dbReference type="Rhea" id="RHEA:15306"/>
    </physiologicalReaction>
</comment>
<comment type="catalytic activity">
    <reaction evidence="2">
        <text>betaine aldehyde + NADP(+) + H2O = glycine betaine + NADPH + 2 H(+)</text>
        <dbReference type="Rhea" id="RHEA:30067"/>
        <dbReference type="ChEBI" id="CHEBI:15377"/>
        <dbReference type="ChEBI" id="CHEBI:15378"/>
        <dbReference type="ChEBI" id="CHEBI:15710"/>
        <dbReference type="ChEBI" id="CHEBI:17750"/>
        <dbReference type="ChEBI" id="CHEBI:57783"/>
        <dbReference type="ChEBI" id="CHEBI:58349"/>
    </reaction>
    <physiologicalReaction direction="left-to-right" evidence="6">
        <dbReference type="Rhea" id="RHEA:30068"/>
    </physiologicalReaction>
</comment>
<comment type="cofactor">
    <cofactor evidence="1 3 4">
        <name>K(+)</name>
        <dbReference type="ChEBI" id="CHEBI:29103"/>
    </cofactor>
    <text evidence="1 3 4">Binds 2 potassium ions per subunit.</text>
</comment>
<comment type="biophysicochemical properties">
    <kinetics>
        <KM evidence="2">507 uM for betaine aldehyde (at pH 8.0 and 30 degrees Celsius, in the presence of NADP(+))</KM>
        <KM evidence="2">434 uM for betaine aldehyde (at pH 8.0 and 30 degrees Celsius, in the presence of NAD(+))</KM>
        <KM evidence="2">83 uM for NADP(+) (at pH 8.0 and 30 degrees Celsius)</KM>
        <KM evidence="2">385 uM for NAD(+) (at pH 8.0 and 30 degrees Celsius)</KM>
        <text evidence="2">kcat is 261 sec(-1) for the NADP-dependent oxidation of betaine aldehyde. kcat is 276 sec(-1) for the NAD-dependent oxidation of betaine aldehyde.</text>
    </kinetics>
</comment>
<comment type="pathway">
    <text evidence="1">Amine and polyamine biosynthesis; betaine biosynthesis via choline pathway; betaine from betaine aldehyde: step 1/1.</text>
</comment>
<comment type="subunit">
    <text evidence="1 3 4 5">Dimer of dimers.</text>
</comment>
<comment type="similarity">
    <text evidence="1">Belongs to the aldehyde dehydrogenase family.</text>
</comment>